<gene>
    <name evidence="1" type="primary">rplK</name>
    <name type="ordered locus">RSKD131_0002</name>
</gene>
<reference key="1">
    <citation type="journal article" date="2009" name="J. Bacteriol.">
        <title>Complete genome sequence of Rhodobacter sphaeroides KD131.</title>
        <authorList>
            <person name="Lim S.-K."/>
            <person name="Kim S.J."/>
            <person name="Cha S.H."/>
            <person name="Oh Y.-K."/>
            <person name="Rhee H.-J."/>
            <person name="Kim M.-S."/>
            <person name="Lee J.K."/>
        </authorList>
    </citation>
    <scope>NUCLEOTIDE SEQUENCE [LARGE SCALE GENOMIC DNA]</scope>
    <source>
        <strain>KD131 / KCTC 12085</strain>
    </source>
</reference>
<keyword id="KW-0488">Methylation</keyword>
<keyword id="KW-0687">Ribonucleoprotein</keyword>
<keyword id="KW-0689">Ribosomal protein</keyword>
<keyword id="KW-0694">RNA-binding</keyword>
<keyword id="KW-0699">rRNA-binding</keyword>
<proteinExistence type="inferred from homology"/>
<feature type="chain" id="PRO_1000195700" description="Large ribosomal subunit protein uL11">
    <location>
        <begin position="1"/>
        <end position="150"/>
    </location>
</feature>
<accession>B9KL79</accession>
<organism>
    <name type="scientific">Cereibacter sphaeroides (strain KD131 / KCTC 12085)</name>
    <name type="common">Rhodobacter sphaeroides</name>
    <dbReference type="NCBI Taxonomy" id="557760"/>
    <lineage>
        <taxon>Bacteria</taxon>
        <taxon>Pseudomonadati</taxon>
        <taxon>Pseudomonadota</taxon>
        <taxon>Alphaproteobacteria</taxon>
        <taxon>Rhodobacterales</taxon>
        <taxon>Paracoccaceae</taxon>
        <taxon>Cereibacter</taxon>
    </lineage>
</organism>
<dbReference type="EMBL" id="CP001150">
    <property type="protein sequence ID" value="ACL99861.1"/>
    <property type="molecule type" value="Genomic_DNA"/>
</dbReference>
<dbReference type="RefSeq" id="WP_002722470.1">
    <property type="nucleotide sequence ID" value="NC_011963.1"/>
</dbReference>
<dbReference type="SMR" id="B9KL79"/>
<dbReference type="GeneID" id="67445488"/>
<dbReference type="KEGG" id="rsk:RSKD131_0002"/>
<dbReference type="HOGENOM" id="CLU_074237_2_0_5"/>
<dbReference type="GO" id="GO:0022625">
    <property type="term" value="C:cytosolic large ribosomal subunit"/>
    <property type="evidence" value="ECO:0007669"/>
    <property type="project" value="TreeGrafter"/>
</dbReference>
<dbReference type="GO" id="GO:0070180">
    <property type="term" value="F:large ribosomal subunit rRNA binding"/>
    <property type="evidence" value="ECO:0007669"/>
    <property type="project" value="UniProtKB-UniRule"/>
</dbReference>
<dbReference type="GO" id="GO:0003735">
    <property type="term" value="F:structural constituent of ribosome"/>
    <property type="evidence" value="ECO:0007669"/>
    <property type="project" value="InterPro"/>
</dbReference>
<dbReference type="GO" id="GO:0006412">
    <property type="term" value="P:translation"/>
    <property type="evidence" value="ECO:0007669"/>
    <property type="project" value="UniProtKB-UniRule"/>
</dbReference>
<dbReference type="CDD" id="cd00349">
    <property type="entry name" value="Ribosomal_L11"/>
    <property type="match status" value="1"/>
</dbReference>
<dbReference type="FunFam" id="3.30.1550.10:FF:000005">
    <property type="entry name" value="50S ribosomal protein L11"/>
    <property type="match status" value="1"/>
</dbReference>
<dbReference type="Gene3D" id="1.10.10.250">
    <property type="entry name" value="Ribosomal protein L11, C-terminal domain"/>
    <property type="match status" value="1"/>
</dbReference>
<dbReference type="Gene3D" id="3.30.1550.10">
    <property type="entry name" value="Ribosomal protein L11/L12, N-terminal domain"/>
    <property type="match status" value="1"/>
</dbReference>
<dbReference type="HAMAP" id="MF_00736">
    <property type="entry name" value="Ribosomal_uL11"/>
    <property type="match status" value="1"/>
</dbReference>
<dbReference type="InterPro" id="IPR000911">
    <property type="entry name" value="Ribosomal_uL11"/>
</dbReference>
<dbReference type="InterPro" id="IPR006519">
    <property type="entry name" value="Ribosomal_uL11_bac-typ"/>
</dbReference>
<dbReference type="InterPro" id="IPR020783">
    <property type="entry name" value="Ribosomal_uL11_C"/>
</dbReference>
<dbReference type="InterPro" id="IPR036769">
    <property type="entry name" value="Ribosomal_uL11_C_sf"/>
</dbReference>
<dbReference type="InterPro" id="IPR020784">
    <property type="entry name" value="Ribosomal_uL11_N"/>
</dbReference>
<dbReference type="InterPro" id="IPR036796">
    <property type="entry name" value="Ribosomal_uL11_N_sf"/>
</dbReference>
<dbReference type="NCBIfam" id="TIGR01632">
    <property type="entry name" value="L11_bact"/>
    <property type="match status" value="1"/>
</dbReference>
<dbReference type="PANTHER" id="PTHR11661">
    <property type="entry name" value="60S RIBOSOMAL PROTEIN L12"/>
    <property type="match status" value="1"/>
</dbReference>
<dbReference type="PANTHER" id="PTHR11661:SF1">
    <property type="entry name" value="LARGE RIBOSOMAL SUBUNIT PROTEIN UL11M"/>
    <property type="match status" value="1"/>
</dbReference>
<dbReference type="Pfam" id="PF00298">
    <property type="entry name" value="Ribosomal_L11"/>
    <property type="match status" value="1"/>
</dbReference>
<dbReference type="Pfam" id="PF03946">
    <property type="entry name" value="Ribosomal_L11_N"/>
    <property type="match status" value="1"/>
</dbReference>
<dbReference type="SMART" id="SM00649">
    <property type="entry name" value="RL11"/>
    <property type="match status" value="1"/>
</dbReference>
<dbReference type="SUPFAM" id="SSF54747">
    <property type="entry name" value="Ribosomal L11/L12e N-terminal domain"/>
    <property type="match status" value="1"/>
</dbReference>
<dbReference type="SUPFAM" id="SSF46906">
    <property type="entry name" value="Ribosomal protein L11, C-terminal domain"/>
    <property type="match status" value="1"/>
</dbReference>
<comment type="function">
    <text evidence="1">Forms part of the ribosomal stalk which helps the ribosome interact with GTP-bound translation factors.</text>
</comment>
<comment type="subunit">
    <text evidence="1">Part of the ribosomal stalk of the 50S ribosomal subunit. Interacts with L10 and the large rRNA to form the base of the stalk. L10 forms an elongated spine to which L12 dimers bind in a sequential fashion forming a multimeric L10(L12)X complex.</text>
</comment>
<comment type="PTM">
    <text evidence="1">One or more lysine residues are methylated.</text>
</comment>
<comment type="similarity">
    <text evidence="1">Belongs to the universal ribosomal protein uL11 family.</text>
</comment>
<sequence>MAKKIIGSLKLQVKAGQANPSPPVGPALGQRGLNIMAFVKEFNAKSADLEPGTPTPVIITYYQDKSFSLELKTPPASFMLKKAAGLAPVGKRNRPKGSTKPGREVAGSVTVAQIRKIAEAKMKDLNANDVEAAMQIILGSAKSCGIEVKG</sequence>
<name>RL11_CERSK</name>
<evidence type="ECO:0000255" key="1">
    <source>
        <dbReference type="HAMAP-Rule" id="MF_00736"/>
    </source>
</evidence>
<evidence type="ECO:0000305" key="2"/>
<protein>
    <recommendedName>
        <fullName evidence="1">Large ribosomal subunit protein uL11</fullName>
    </recommendedName>
    <alternativeName>
        <fullName evidence="2">50S ribosomal protein L11</fullName>
    </alternativeName>
</protein>